<feature type="chain" id="PRO_0000069860" description="Motilin receptor">
    <location>
        <begin position="1"/>
        <end position="412"/>
    </location>
</feature>
<feature type="topological domain" description="Extracellular" evidence="1">
    <location>
        <begin position="1"/>
        <end position="35"/>
    </location>
</feature>
<feature type="transmembrane region" description="Helical; Name=1" evidence="1">
    <location>
        <begin position="36"/>
        <end position="56"/>
    </location>
</feature>
<feature type="topological domain" description="Cytoplasmic" evidence="1">
    <location>
        <begin position="57"/>
        <end position="74"/>
    </location>
</feature>
<feature type="transmembrane region" description="Helical; Name=2" evidence="1">
    <location>
        <begin position="75"/>
        <end position="94"/>
    </location>
</feature>
<feature type="topological domain" description="Extracellular" evidence="1">
    <location>
        <begin position="95"/>
        <end position="112"/>
    </location>
</feature>
<feature type="transmembrane region" description="Helical; Name=3" evidence="1">
    <location>
        <begin position="113"/>
        <end position="134"/>
    </location>
</feature>
<feature type="topological domain" description="Cytoplasmic" evidence="1">
    <location>
        <begin position="135"/>
        <end position="157"/>
    </location>
</feature>
<feature type="transmembrane region" description="Helical; Name=4" evidence="1">
    <location>
        <begin position="158"/>
        <end position="178"/>
    </location>
</feature>
<feature type="topological domain" description="Extracellular" evidence="1">
    <location>
        <begin position="179"/>
        <end position="246"/>
    </location>
</feature>
<feature type="transmembrane region" description="Helical; Name=5" evidence="1">
    <location>
        <begin position="247"/>
        <end position="270"/>
    </location>
</feature>
<feature type="topological domain" description="Cytoplasmic" evidence="1">
    <location>
        <begin position="271"/>
        <end position="298"/>
    </location>
</feature>
<feature type="transmembrane region" description="Helical; Name=6" evidence="1">
    <location>
        <begin position="299"/>
        <end position="320"/>
    </location>
</feature>
<feature type="topological domain" description="Extracellular" evidence="1">
    <location>
        <begin position="321"/>
        <end position="334"/>
    </location>
</feature>
<feature type="transmembrane region" description="Helical; Name=7" evidence="1">
    <location>
        <begin position="335"/>
        <end position="358"/>
    </location>
</feature>
<feature type="topological domain" description="Cytoplasmic" evidence="1">
    <location>
        <begin position="359"/>
        <end position="412"/>
    </location>
</feature>
<feature type="glycosylation site" description="N-linked (GlcNAc...) asparagine" evidence="1">
    <location>
        <position position="6"/>
    </location>
</feature>
<feature type="glycosylation site" description="N-linked (GlcNAc...) asparagine" evidence="1">
    <location>
        <position position="192"/>
    </location>
</feature>
<feature type="disulfide bond" evidence="2">
    <location>
        <begin position="111"/>
        <end position="235"/>
    </location>
</feature>
<feature type="splice variant" id="VSP_001894" description="In isoform B." evidence="4">
    <original>LVVVLAFIICWLPFHVGRIIYINTEDSRMMYFSQYFNIVALQLFYLSASINPILYNLISKKYRAAAFKLLLARKSRPRGFHRSRDTAGEVAGDTGGDTVGYTETSANVKTMG</original>
    <variation>RKWSRRGSKDACLQSAPPGTAQTLGPLPLLAQLWAPLPAPFPISIPASTRRGGGSGIYNLLVALPRWQNHLHKHGRFADDVLLSVL</variation>
    <location>
        <begin position="301"/>
        <end position="412"/>
    </location>
</feature>
<feature type="helix" evidence="5">
    <location>
        <begin position="35"/>
        <end position="65"/>
    </location>
</feature>
<feature type="helix" evidence="5">
    <location>
        <begin position="72"/>
        <end position="88"/>
    </location>
</feature>
<feature type="helix" evidence="5">
    <location>
        <begin position="91"/>
        <end position="99"/>
    </location>
</feature>
<feature type="helix" evidence="5">
    <location>
        <begin position="108"/>
        <end position="140"/>
    </location>
</feature>
<feature type="helix" evidence="5">
    <location>
        <begin position="152"/>
        <end position="169"/>
    </location>
</feature>
<feature type="helix" evidence="5">
    <location>
        <begin position="171"/>
        <end position="174"/>
    </location>
</feature>
<feature type="helix" evidence="5">
    <location>
        <begin position="226"/>
        <end position="230"/>
    </location>
</feature>
<feature type="helix" evidence="5">
    <location>
        <begin position="242"/>
        <end position="252"/>
    </location>
</feature>
<feature type="helix" evidence="5">
    <location>
        <begin position="254"/>
        <end position="274"/>
    </location>
</feature>
<feature type="helix" evidence="5">
    <location>
        <begin position="293"/>
        <end position="321"/>
    </location>
</feature>
<feature type="helix" evidence="5">
    <location>
        <begin position="327"/>
        <end position="355"/>
    </location>
</feature>
<feature type="turn" evidence="5">
    <location>
        <begin position="356"/>
        <end position="358"/>
    </location>
</feature>
<feature type="helix" evidence="5">
    <location>
        <begin position="360"/>
        <end position="370"/>
    </location>
</feature>
<dbReference type="EMBL" id="AF034632">
    <property type="protein sequence ID" value="AAC26081.1"/>
    <property type="molecule type" value="Genomic_DNA"/>
</dbReference>
<dbReference type="EMBL" id="AY603964">
    <property type="protein sequence ID" value="AAT35806.1"/>
    <property type="molecule type" value="mRNA"/>
</dbReference>
<dbReference type="EMBL" id="AL137000">
    <property type="status" value="NOT_ANNOTATED_CDS"/>
    <property type="molecule type" value="Genomic_DNA"/>
</dbReference>
<dbReference type="CCDS" id="CCDS9414.1">
    <molecule id="O43193-1"/>
</dbReference>
<dbReference type="RefSeq" id="NP_001498.1">
    <molecule id="O43193-1"/>
    <property type="nucleotide sequence ID" value="NM_001507.1"/>
</dbReference>
<dbReference type="PDB" id="8IBU">
    <property type="method" value="EM"/>
    <property type="resolution" value="3.51 A"/>
    <property type="chains" value="R=1-412"/>
</dbReference>
<dbReference type="PDB" id="8IBV">
    <property type="method" value="EM"/>
    <property type="resolution" value="3.19 A"/>
    <property type="chains" value="R=1-412"/>
</dbReference>
<dbReference type="PDBsum" id="8IBU"/>
<dbReference type="PDBsum" id="8IBV"/>
<dbReference type="EMDB" id="EMD-35345"/>
<dbReference type="EMDB" id="EMD-35346"/>
<dbReference type="SMR" id="O43193"/>
<dbReference type="BioGRID" id="109120">
    <property type="interactions" value="64"/>
</dbReference>
<dbReference type="FunCoup" id="O43193">
    <property type="interactions" value="656"/>
</dbReference>
<dbReference type="IntAct" id="O43193">
    <property type="interactions" value="63"/>
</dbReference>
<dbReference type="STRING" id="9606.ENSP00000218721"/>
<dbReference type="BindingDB" id="O43193"/>
<dbReference type="ChEMBL" id="CHEMBL2203"/>
<dbReference type="DrugBank" id="DB12567">
    <property type="generic name" value="Camicinal"/>
</dbReference>
<dbReference type="DrugBank" id="DB00199">
    <property type="generic name" value="Erythromycin"/>
</dbReference>
<dbReference type="DrugBank" id="DB06587">
    <property type="generic name" value="Mitemcinal"/>
</dbReference>
<dbReference type="DrugCentral" id="O43193"/>
<dbReference type="GuidetoPHARMACOLOGY" id="297"/>
<dbReference type="GlyCosmos" id="O43193">
    <property type="glycosylation" value="2 sites, No reported glycans"/>
</dbReference>
<dbReference type="GlyGen" id="O43193">
    <property type="glycosylation" value="2 sites"/>
</dbReference>
<dbReference type="iPTMnet" id="O43193"/>
<dbReference type="PhosphoSitePlus" id="O43193"/>
<dbReference type="BioMuta" id="MLNR"/>
<dbReference type="MassIVE" id="O43193"/>
<dbReference type="PaxDb" id="9606-ENSP00000218721"/>
<dbReference type="PeptideAtlas" id="O43193"/>
<dbReference type="ProteomicsDB" id="48807">
    <molecule id="O43193-1"/>
</dbReference>
<dbReference type="ProteomicsDB" id="48808">
    <molecule id="O43193-2"/>
</dbReference>
<dbReference type="Antibodypedia" id="42284">
    <property type="antibodies" value="211 antibodies from 26 providers"/>
</dbReference>
<dbReference type="DNASU" id="2862"/>
<dbReference type="Ensembl" id="ENST00000218721.1">
    <molecule id="O43193-1"/>
    <property type="protein sequence ID" value="ENSP00000218721.1"/>
    <property type="gene ID" value="ENSG00000102539.5"/>
</dbReference>
<dbReference type="GeneID" id="2862"/>
<dbReference type="KEGG" id="hsa:2862"/>
<dbReference type="MANE-Select" id="ENST00000218721.1">
    <property type="protein sequence ID" value="ENSP00000218721.1"/>
    <property type="RefSeq nucleotide sequence ID" value="NM_001507.1"/>
    <property type="RefSeq protein sequence ID" value="NP_001498.1"/>
</dbReference>
<dbReference type="UCSC" id="uc010tgj.2">
    <molecule id="O43193-1"/>
    <property type="organism name" value="human"/>
</dbReference>
<dbReference type="AGR" id="HGNC:4495"/>
<dbReference type="CTD" id="2862"/>
<dbReference type="DisGeNET" id="2862"/>
<dbReference type="GeneCards" id="MLNR"/>
<dbReference type="HGNC" id="HGNC:4495">
    <property type="gene designation" value="MLNR"/>
</dbReference>
<dbReference type="HPA" id="ENSG00000102539">
    <property type="expression patterns" value="Tissue enhanced (bone marrow, thyroid gland)"/>
</dbReference>
<dbReference type="MIM" id="602885">
    <property type="type" value="gene"/>
</dbReference>
<dbReference type="neXtProt" id="NX_O43193"/>
<dbReference type="OpenTargets" id="ENSG00000102539"/>
<dbReference type="PharmGKB" id="PA28884"/>
<dbReference type="VEuPathDB" id="HostDB:ENSG00000102539"/>
<dbReference type="eggNOG" id="KOG3656">
    <property type="taxonomic scope" value="Eukaryota"/>
</dbReference>
<dbReference type="GeneTree" id="ENSGT01130000278335"/>
<dbReference type="HOGENOM" id="CLU_009579_6_5_1"/>
<dbReference type="InParanoid" id="O43193"/>
<dbReference type="OMA" id="WAALPPC"/>
<dbReference type="OrthoDB" id="10011262at2759"/>
<dbReference type="PAN-GO" id="O43193">
    <property type="GO annotations" value="3 GO annotations based on evolutionary models"/>
</dbReference>
<dbReference type="PhylomeDB" id="O43193"/>
<dbReference type="TreeFam" id="TF336314"/>
<dbReference type="PathwayCommons" id="O43193"/>
<dbReference type="Reactome" id="R-HSA-375276">
    <property type="pathway name" value="Peptide ligand-binding receptors"/>
</dbReference>
<dbReference type="Reactome" id="R-HSA-416476">
    <property type="pathway name" value="G alpha (q) signalling events"/>
</dbReference>
<dbReference type="SignaLink" id="O43193"/>
<dbReference type="SIGNOR" id="O43193"/>
<dbReference type="BioGRID-ORCS" id="2862">
    <property type="hits" value="7 hits in 1146 CRISPR screens"/>
</dbReference>
<dbReference type="GeneWiki" id="Motilin_receptor"/>
<dbReference type="GenomeRNAi" id="2862"/>
<dbReference type="Pharos" id="O43193">
    <property type="development level" value="Tchem"/>
</dbReference>
<dbReference type="PRO" id="PR:O43193"/>
<dbReference type="Proteomes" id="UP000005640">
    <property type="component" value="Chromosome 13"/>
</dbReference>
<dbReference type="RNAct" id="O43193">
    <property type="molecule type" value="protein"/>
</dbReference>
<dbReference type="Bgee" id="ENSG00000102539">
    <property type="expression patterns" value="Expressed in male germ line stem cell (sensu Vertebrata) in testis and 25 other cell types or tissues"/>
</dbReference>
<dbReference type="GO" id="GO:0005829">
    <property type="term" value="C:cytosol"/>
    <property type="evidence" value="ECO:0000314"/>
    <property type="project" value="HPA"/>
</dbReference>
<dbReference type="GO" id="GO:0005886">
    <property type="term" value="C:plasma membrane"/>
    <property type="evidence" value="ECO:0000314"/>
    <property type="project" value="HPA"/>
</dbReference>
<dbReference type="GO" id="GO:0008528">
    <property type="term" value="F:G protein-coupled peptide receptor activity"/>
    <property type="evidence" value="ECO:0000353"/>
    <property type="project" value="GO_Central"/>
</dbReference>
<dbReference type="GO" id="GO:0042562">
    <property type="term" value="F:hormone binding"/>
    <property type="evidence" value="ECO:0000353"/>
    <property type="project" value="GO_Central"/>
</dbReference>
<dbReference type="GO" id="GO:0007186">
    <property type="term" value="P:G protein-coupled receptor signaling pathway"/>
    <property type="evidence" value="ECO:0000318"/>
    <property type="project" value="GO_Central"/>
</dbReference>
<dbReference type="Gene3D" id="1.20.1070.10">
    <property type="entry name" value="Rhodopsin 7-helix transmembrane proteins"/>
    <property type="match status" value="1"/>
</dbReference>
<dbReference type="InterPro" id="IPR003905">
    <property type="entry name" value="GHS-R/MTLR"/>
</dbReference>
<dbReference type="InterPro" id="IPR000276">
    <property type="entry name" value="GPCR_Rhodpsn"/>
</dbReference>
<dbReference type="InterPro" id="IPR017452">
    <property type="entry name" value="GPCR_Rhodpsn_7TM"/>
</dbReference>
<dbReference type="PANTHER" id="PTHR24243">
    <property type="entry name" value="G-PROTEIN COUPLED RECEPTOR"/>
    <property type="match status" value="1"/>
</dbReference>
<dbReference type="PANTHER" id="PTHR24243:SF3">
    <property type="entry name" value="MOTILIN RECEPTOR"/>
    <property type="match status" value="1"/>
</dbReference>
<dbReference type="Pfam" id="PF00001">
    <property type="entry name" value="7tm_1"/>
    <property type="match status" value="2"/>
</dbReference>
<dbReference type="PRINTS" id="PR01417">
    <property type="entry name" value="GHSRECEPTOR"/>
</dbReference>
<dbReference type="PRINTS" id="PR00237">
    <property type="entry name" value="GPCRRHODOPSN"/>
</dbReference>
<dbReference type="SMART" id="SM01381">
    <property type="entry name" value="7TM_GPCR_Srsx"/>
    <property type="match status" value="1"/>
</dbReference>
<dbReference type="SUPFAM" id="SSF81321">
    <property type="entry name" value="Family A G protein-coupled receptor-like"/>
    <property type="match status" value="1"/>
</dbReference>
<dbReference type="PROSITE" id="PS00237">
    <property type="entry name" value="G_PROTEIN_RECEP_F1_1"/>
    <property type="match status" value="1"/>
</dbReference>
<dbReference type="PROSITE" id="PS50262">
    <property type="entry name" value="G_PROTEIN_RECEP_F1_2"/>
    <property type="match status" value="1"/>
</dbReference>
<sequence>MGSPWNGSDGPEGAREPPWPALPPCDERRCSPFPLGALVPVTAVCLCLFVVGVSGNVVTVMLIGRYRDMRTTTNLYLGSMAVSDLLILLGLPFDLYRLWRSRPWVFGPLLCRLSLYVGEGCTYATLLHMTALSVERYLAICRPLRARVLVTRRRVRALIAVLWAVALLSAGPFLFLVGVEQDPGISVVPGLNGTARIASSPLASSPPLWLSRAPPPSPPSGPETAEAAALFSRECRPSPAQLGALRVMLWVTTAYFFLPFLCLSILYGLIGRELWSSRRPLRGPAASGRERGHRQTVRVLLVVVLAFIICWLPFHVGRIIYINTEDSRMMYFSQYFNIVALQLFYLSASINPILYNLISKKYRAAAFKLLLARKSRPRGFHRSRDTAGEVAGDTGGDTVGYTETSANVKTMG</sequence>
<comment type="function">
    <text evidence="3">Receptor for motilin.</text>
</comment>
<comment type="subcellular location">
    <subcellularLocation>
        <location>Cell membrane</location>
        <topology>Multi-pass membrane protein</topology>
    </subcellularLocation>
</comment>
<comment type="alternative products">
    <event type="alternative splicing"/>
    <isoform>
        <id>O43193-1</id>
        <name>A</name>
        <sequence type="displayed"/>
    </isoform>
    <isoform>
        <id>O43193-2</id>
        <name>B</name>
        <sequence type="described" ref="VSP_001894"/>
    </isoform>
</comment>
<comment type="tissue specificity">
    <text>Expressed only in thyroid, stomach, and bone marrow.</text>
</comment>
<comment type="similarity">
    <text evidence="2">Belongs to the G-protein coupled receptor 1 family.</text>
</comment>
<reference key="1">
    <citation type="journal article" date="1997" name="Genomics">
        <title>Cloning and characterization of two human G protein-coupled receptor genes (GPR38 and GPR39) related to the growth hormone secretagogue and neurotensin receptors.</title>
        <authorList>
            <person name="McKee K.K."/>
            <person name="Tan C.P."/>
            <person name="Palyha O.C."/>
            <person name="Liu J."/>
            <person name="Feighner S.D."/>
            <person name="Hreniuk D.L."/>
            <person name="Smith R.G."/>
            <person name="Howard A.D."/>
            <person name="van der Ploeg L.H.T."/>
        </authorList>
    </citation>
    <scope>NUCLEOTIDE SEQUENCE [GENOMIC DNA] (ISOFORM A)</scope>
</reference>
<reference key="2">
    <citation type="journal article" date="1999" name="Science">
        <title>Receptor for motilin identified in the human gastrointestinal system.</title>
        <authorList>
            <person name="Feighner S.D."/>
            <person name="Tan C.P."/>
            <person name="McKee K.K."/>
            <person name="Palyha O.C."/>
            <person name="Hreniuk D.L."/>
            <person name="Pong S.-S."/>
            <person name="Austin C.P."/>
            <person name="Figueroa D."/>
            <person name="MacNeil D."/>
            <person name="Cascieri M.A."/>
            <person name="Nargund R."/>
            <person name="Bakshi R."/>
            <person name="Abramovitz M."/>
            <person name="Stocco R."/>
            <person name="Kargman S."/>
            <person name="O'Neill G."/>
            <person name="van Der Ploeg L.H.T."/>
            <person name="Evans J."/>
            <person name="Patchett A.A."/>
            <person name="Smith R.G."/>
            <person name="Howard A.D."/>
        </authorList>
    </citation>
    <scope>NUCLEOTIDE SEQUENCE (ISOFORMS A AND B)</scope>
</reference>
<reference key="3">
    <citation type="submission" date="2004-04" db="EMBL/GenBank/DDBJ databases">
        <title>cDNA clones of human proteins involved in signal transduction sequenced by the Guthrie cDNA resource center (www.cdna.org).</title>
        <authorList>
            <person name="King M.M."/>
            <person name="Aronstam R.S."/>
            <person name="Sharma S.V."/>
        </authorList>
    </citation>
    <scope>NUCLEOTIDE SEQUENCE [LARGE SCALE MRNA] (ISOFORM A)</scope>
    <source>
        <tissue>Stomach</tissue>
    </source>
</reference>
<reference key="4">
    <citation type="journal article" date="2004" name="Nature">
        <title>The DNA sequence and analysis of human chromosome 13.</title>
        <authorList>
            <person name="Dunham A."/>
            <person name="Matthews L.H."/>
            <person name="Burton J."/>
            <person name="Ashurst J.L."/>
            <person name="Howe K.L."/>
            <person name="Ashcroft K.J."/>
            <person name="Beare D.M."/>
            <person name="Burford D.C."/>
            <person name="Hunt S.E."/>
            <person name="Griffiths-Jones S."/>
            <person name="Jones M.C."/>
            <person name="Keenan S.J."/>
            <person name="Oliver K."/>
            <person name="Scott C.E."/>
            <person name="Ainscough R."/>
            <person name="Almeida J.P."/>
            <person name="Ambrose K.D."/>
            <person name="Andrews D.T."/>
            <person name="Ashwell R.I.S."/>
            <person name="Babbage A.K."/>
            <person name="Bagguley C.L."/>
            <person name="Bailey J."/>
            <person name="Bannerjee R."/>
            <person name="Barlow K.F."/>
            <person name="Bates K."/>
            <person name="Beasley H."/>
            <person name="Bird C.P."/>
            <person name="Bray-Allen S."/>
            <person name="Brown A.J."/>
            <person name="Brown J.Y."/>
            <person name="Burrill W."/>
            <person name="Carder C."/>
            <person name="Carter N.P."/>
            <person name="Chapman J.C."/>
            <person name="Clamp M.E."/>
            <person name="Clark S.Y."/>
            <person name="Clarke G."/>
            <person name="Clee C.M."/>
            <person name="Clegg S.C."/>
            <person name="Cobley V."/>
            <person name="Collins J.E."/>
            <person name="Corby N."/>
            <person name="Coville G.J."/>
            <person name="Deloukas P."/>
            <person name="Dhami P."/>
            <person name="Dunham I."/>
            <person name="Dunn M."/>
            <person name="Earthrowl M.E."/>
            <person name="Ellington A.G."/>
            <person name="Faulkner L."/>
            <person name="Frankish A.G."/>
            <person name="Frankland J."/>
            <person name="French L."/>
            <person name="Garner P."/>
            <person name="Garnett J."/>
            <person name="Gilbert J.G.R."/>
            <person name="Gilson C.J."/>
            <person name="Ghori J."/>
            <person name="Grafham D.V."/>
            <person name="Gribble S.M."/>
            <person name="Griffiths C."/>
            <person name="Hall R.E."/>
            <person name="Hammond S."/>
            <person name="Harley J.L."/>
            <person name="Hart E.A."/>
            <person name="Heath P.D."/>
            <person name="Howden P.J."/>
            <person name="Huckle E.J."/>
            <person name="Hunt P.J."/>
            <person name="Hunt A.R."/>
            <person name="Johnson C."/>
            <person name="Johnson D."/>
            <person name="Kay M."/>
            <person name="Kimberley A.M."/>
            <person name="King A."/>
            <person name="Laird G.K."/>
            <person name="Langford C.J."/>
            <person name="Lawlor S."/>
            <person name="Leongamornlert D.A."/>
            <person name="Lloyd D.M."/>
            <person name="Lloyd C."/>
            <person name="Loveland J.E."/>
            <person name="Lovell J."/>
            <person name="Martin S."/>
            <person name="Mashreghi-Mohammadi M."/>
            <person name="McLaren S.J."/>
            <person name="McMurray A."/>
            <person name="Milne S."/>
            <person name="Moore M.J.F."/>
            <person name="Nickerson T."/>
            <person name="Palmer S.A."/>
            <person name="Pearce A.V."/>
            <person name="Peck A.I."/>
            <person name="Pelan S."/>
            <person name="Phillimore B."/>
            <person name="Porter K.M."/>
            <person name="Rice C.M."/>
            <person name="Searle S."/>
            <person name="Sehra H.K."/>
            <person name="Shownkeen R."/>
            <person name="Skuce C.D."/>
            <person name="Smith M."/>
            <person name="Steward C.A."/>
            <person name="Sycamore N."/>
            <person name="Tester J."/>
            <person name="Thomas D.W."/>
            <person name="Tracey A."/>
            <person name="Tromans A."/>
            <person name="Tubby B."/>
            <person name="Wall M."/>
            <person name="Wallis J.M."/>
            <person name="West A.P."/>
            <person name="Whitehead S.L."/>
            <person name="Willey D.L."/>
            <person name="Wilming L."/>
            <person name="Wray P.W."/>
            <person name="Wright M.W."/>
            <person name="Young L."/>
            <person name="Coulson A."/>
            <person name="Durbin R.M."/>
            <person name="Hubbard T."/>
            <person name="Sulston J.E."/>
            <person name="Beck S."/>
            <person name="Bentley D.R."/>
            <person name="Rogers J."/>
            <person name="Ross M.T."/>
        </authorList>
    </citation>
    <scope>NUCLEOTIDE SEQUENCE [LARGE SCALE GENOMIC DNA]</scope>
</reference>
<reference key="5">
    <citation type="journal article" date="2001" name="Endocrine">
        <title>Growth hormone secretagogue receptor family members and ligands.</title>
        <authorList>
            <person name="Smith R.G."/>
            <person name="Leonard R."/>
            <person name="Bailey A.R.T."/>
            <person name="Palyha O.C."/>
            <person name="Feighner S.D."/>
            <person name="Tan C.P."/>
            <person name="Mckee K.K."/>
            <person name="Pong S.-S."/>
            <person name="Griffin P.R."/>
            <person name="Howard A.D."/>
        </authorList>
    </citation>
    <scope>FUNCTION</scope>
</reference>
<evidence type="ECO:0000255" key="1"/>
<evidence type="ECO:0000255" key="2">
    <source>
        <dbReference type="PROSITE-ProRule" id="PRU00521"/>
    </source>
</evidence>
<evidence type="ECO:0000269" key="3">
    <source>
    </source>
</evidence>
<evidence type="ECO:0000305" key="4"/>
<evidence type="ECO:0007829" key="5">
    <source>
        <dbReference type="PDB" id="8IBV"/>
    </source>
</evidence>
<organism>
    <name type="scientific">Homo sapiens</name>
    <name type="common">Human</name>
    <dbReference type="NCBI Taxonomy" id="9606"/>
    <lineage>
        <taxon>Eukaryota</taxon>
        <taxon>Metazoa</taxon>
        <taxon>Chordata</taxon>
        <taxon>Craniata</taxon>
        <taxon>Vertebrata</taxon>
        <taxon>Euteleostomi</taxon>
        <taxon>Mammalia</taxon>
        <taxon>Eutheria</taxon>
        <taxon>Euarchontoglires</taxon>
        <taxon>Primates</taxon>
        <taxon>Haplorrhini</taxon>
        <taxon>Catarrhini</taxon>
        <taxon>Hominidae</taxon>
        <taxon>Homo</taxon>
    </lineage>
</organism>
<name>MTLR_HUMAN</name>
<gene>
    <name type="primary">MLNR</name>
    <name type="synonym">GPR38</name>
    <name type="synonym">MTLR</name>
    <name type="synonym">MTLR1</name>
</gene>
<keyword id="KW-0002">3D-structure</keyword>
<keyword id="KW-0025">Alternative splicing</keyword>
<keyword id="KW-1003">Cell membrane</keyword>
<keyword id="KW-1015">Disulfide bond</keyword>
<keyword id="KW-0297">G-protein coupled receptor</keyword>
<keyword id="KW-0325">Glycoprotein</keyword>
<keyword id="KW-0472">Membrane</keyword>
<keyword id="KW-1267">Proteomics identification</keyword>
<keyword id="KW-0675">Receptor</keyword>
<keyword id="KW-1185">Reference proteome</keyword>
<keyword id="KW-0807">Transducer</keyword>
<keyword id="KW-0812">Transmembrane</keyword>
<keyword id="KW-1133">Transmembrane helix</keyword>
<proteinExistence type="evidence at protein level"/>
<accession>O43193</accession>
<protein>
    <recommendedName>
        <fullName>Motilin receptor</fullName>
    </recommendedName>
    <alternativeName>
        <fullName>G-protein coupled receptor 38</fullName>
    </alternativeName>
</protein>